<proteinExistence type="inferred from homology"/>
<accession>Q57657</accession>
<protein>
    <recommendedName>
        <fullName evidence="2">Amidophosphoribosyltransferase</fullName>
        <shortName evidence="2">ATase</shortName>
        <ecNumber evidence="2">2.4.2.14</ecNumber>
    </recommendedName>
    <alternativeName>
        <fullName evidence="2">Glutamine phosphoribosylpyrophosphate amidotransferase</fullName>
        <shortName evidence="2">GPATase</shortName>
    </alternativeName>
</protein>
<organism>
    <name type="scientific">Methanocaldococcus jannaschii (strain ATCC 43067 / DSM 2661 / JAL-1 / JCM 10045 / NBRC 100440)</name>
    <name type="common">Methanococcus jannaschii</name>
    <dbReference type="NCBI Taxonomy" id="243232"/>
    <lineage>
        <taxon>Archaea</taxon>
        <taxon>Methanobacteriati</taxon>
        <taxon>Methanobacteriota</taxon>
        <taxon>Methanomada group</taxon>
        <taxon>Methanococci</taxon>
        <taxon>Methanococcales</taxon>
        <taxon>Methanocaldococcaceae</taxon>
        <taxon>Methanocaldococcus</taxon>
    </lineage>
</organism>
<reference key="1">
    <citation type="journal article" date="1996" name="Science">
        <title>Complete genome sequence of the methanogenic archaeon, Methanococcus jannaschii.</title>
        <authorList>
            <person name="Bult C.J."/>
            <person name="White O."/>
            <person name="Olsen G.J."/>
            <person name="Zhou L."/>
            <person name="Fleischmann R.D."/>
            <person name="Sutton G.G."/>
            <person name="Blake J.A."/>
            <person name="FitzGerald L.M."/>
            <person name="Clayton R.A."/>
            <person name="Gocayne J.D."/>
            <person name="Kerlavage A.R."/>
            <person name="Dougherty B.A."/>
            <person name="Tomb J.-F."/>
            <person name="Adams M.D."/>
            <person name="Reich C.I."/>
            <person name="Overbeek R."/>
            <person name="Kirkness E.F."/>
            <person name="Weinstock K.G."/>
            <person name="Merrick J.M."/>
            <person name="Glodek A."/>
            <person name="Scott J.L."/>
            <person name="Geoghagen N.S.M."/>
            <person name="Weidman J.F."/>
            <person name="Fuhrmann J.L."/>
            <person name="Nguyen D."/>
            <person name="Utterback T.R."/>
            <person name="Kelley J.M."/>
            <person name="Peterson J.D."/>
            <person name="Sadow P.W."/>
            <person name="Hanna M.C."/>
            <person name="Cotton M.D."/>
            <person name="Roberts K.M."/>
            <person name="Hurst M.A."/>
            <person name="Kaine B.P."/>
            <person name="Borodovsky M."/>
            <person name="Klenk H.-P."/>
            <person name="Fraser C.M."/>
            <person name="Smith H.O."/>
            <person name="Woese C.R."/>
            <person name="Venter J.C."/>
        </authorList>
    </citation>
    <scope>NUCLEOTIDE SEQUENCE [LARGE SCALE GENOMIC DNA]</scope>
    <source>
        <strain>ATCC 43067 / DSM 2661 / JAL-1 / JCM 10045 / NBRC 100440</strain>
    </source>
</reference>
<dbReference type="EC" id="2.4.2.14" evidence="2"/>
<dbReference type="EMBL" id="L77117">
    <property type="protein sequence ID" value="AAB98188.1"/>
    <property type="molecule type" value="Genomic_DNA"/>
</dbReference>
<dbReference type="PIR" id="E64325">
    <property type="entry name" value="E64325"/>
</dbReference>
<dbReference type="RefSeq" id="WP_010869699.1">
    <property type="nucleotide sequence ID" value="NC_000909.1"/>
</dbReference>
<dbReference type="SMR" id="Q57657"/>
<dbReference type="FunCoup" id="Q57657">
    <property type="interactions" value="134"/>
</dbReference>
<dbReference type="STRING" id="243232.MJ_0204"/>
<dbReference type="MEROPS" id="C44.001"/>
<dbReference type="PaxDb" id="243232-MJ_0204"/>
<dbReference type="EnsemblBacteria" id="AAB98188">
    <property type="protein sequence ID" value="AAB98188"/>
    <property type="gene ID" value="MJ_0204"/>
</dbReference>
<dbReference type="GeneID" id="1451053"/>
<dbReference type="KEGG" id="mja:MJ_0204"/>
<dbReference type="eggNOG" id="arCOG00093">
    <property type="taxonomic scope" value="Archaea"/>
</dbReference>
<dbReference type="HOGENOM" id="CLU_022389_3_1_2"/>
<dbReference type="InParanoid" id="Q57657"/>
<dbReference type="OrthoDB" id="5976at2157"/>
<dbReference type="PhylomeDB" id="Q57657"/>
<dbReference type="UniPathway" id="UPA00074">
    <property type="reaction ID" value="UER00124"/>
</dbReference>
<dbReference type="Proteomes" id="UP000000805">
    <property type="component" value="Chromosome"/>
</dbReference>
<dbReference type="GO" id="GO:0051539">
    <property type="term" value="F:4 iron, 4 sulfur cluster binding"/>
    <property type="evidence" value="ECO:0007669"/>
    <property type="project" value="UniProtKB-KW"/>
</dbReference>
<dbReference type="GO" id="GO:0004044">
    <property type="term" value="F:amidophosphoribosyltransferase activity"/>
    <property type="evidence" value="ECO:0000318"/>
    <property type="project" value="GO_Central"/>
</dbReference>
<dbReference type="GO" id="GO:0000287">
    <property type="term" value="F:magnesium ion binding"/>
    <property type="evidence" value="ECO:0007669"/>
    <property type="project" value="UniProtKB-UniRule"/>
</dbReference>
<dbReference type="GO" id="GO:0006189">
    <property type="term" value="P:'de novo' IMP biosynthetic process"/>
    <property type="evidence" value="ECO:0007669"/>
    <property type="project" value="UniProtKB-UniRule"/>
</dbReference>
<dbReference type="GO" id="GO:0009113">
    <property type="term" value="P:purine nucleobase biosynthetic process"/>
    <property type="evidence" value="ECO:0007669"/>
    <property type="project" value="InterPro"/>
</dbReference>
<dbReference type="GO" id="GO:0006164">
    <property type="term" value="P:purine nucleotide biosynthetic process"/>
    <property type="evidence" value="ECO:0000318"/>
    <property type="project" value="GO_Central"/>
</dbReference>
<dbReference type="CDD" id="cd00715">
    <property type="entry name" value="GPATase_N"/>
    <property type="match status" value="1"/>
</dbReference>
<dbReference type="CDD" id="cd06223">
    <property type="entry name" value="PRTases_typeI"/>
    <property type="match status" value="1"/>
</dbReference>
<dbReference type="Gene3D" id="3.40.50.2020">
    <property type="match status" value="1"/>
</dbReference>
<dbReference type="Gene3D" id="3.60.20.10">
    <property type="entry name" value="Glutamine Phosphoribosylpyrophosphate, subunit 1, domain 1"/>
    <property type="match status" value="1"/>
</dbReference>
<dbReference type="HAMAP" id="MF_01931">
    <property type="entry name" value="PurF"/>
    <property type="match status" value="1"/>
</dbReference>
<dbReference type="InterPro" id="IPR017932">
    <property type="entry name" value="GATase_2_dom"/>
</dbReference>
<dbReference type="InterPro" id="IPR029055">
    <property type="entry name" value="Ntn_hydrolases_N"/>
</dbReference>
<dbReference type="InterPro" id="IPR000836">
    <property type="entry name" value="PRibTrfase_dom"/>
</dbReference>
<dbReference type="InterPro" id="IPR029057">
    <property type="entry name" value="PRTase-like"/>
</dbReference>
<dbReference type="InterPro" id="IPR005854">
    <property type="entry name" value="PurF"/>
</dbReference>
<dbReference type="InterPro" id="IPR035584">
    <property type="entry name" value="PurF_N"/>
</dbReference>
<dbReference type="NCBIfam" id="TIGR01134">
    <property type="entry name" value="purF"/>
    <property type="match status" value="1"/>
</dbReference>
<dbReference type="PANTHER" id="PTHR11907">
    <property type="entry name" value="AMIDOPHOSPHORIBOSYLTRANSFERASE"/>
    <property type="match status" value="1"/>
</dbReference>
<dbReference type="Pfam" id="PF13522">
    <property type="entry name" value="GATase_6"/>
    <property type="match status" value="1"/>
</dbReference>
<dbReference type="Pfam" id="PF00156">
    <property type="entry name" value="Pribosyltran"/>
    <property type="match status" value="1"/>
</dbReference>
<dbReference type="PIRSF" id="PIRSF000485">
    <property type="entry name" value="Amd_phspho_trans"/>
    <property type="match status" value="1"/>
</dbReference>
<dbReference type="SUPFAM" id="SSF56235">
    <property type="entry name" value="N-terminal nucleophile aminohydrolases (Ntn hydrolases)"/>
    <property type="match status" value="1"/>
</dbReference>
<dbReference type="SUPFAM" id="SSF53271">
    <property type="entry name" value="PRTase-like"/>
    <property type="match status" value="1"/>
</dbReference>
<dbReference type="PROSITE" id="PS51278">
    <property type="entry name" value="GATASE_TYPE_2"/>
    <property type="match status" value="1"/>
</dbReference>
<dbReference type="PROSITE" id="PS00103">
    <property type="entry name" value="PUR_PYR_PR_TRANSFER"/>
    <property type="match status" value="1"/>
</dbReference>
<comment type="function">
    <text evidence="2">Catalyzes the formation of phosphoribosylamine from phosphoribosylpyrophosphate (PRPP) and glutamine.</text>
</comment>
<comment type="catalytic activity">
    <reaction evidence="2">
        <text>5-phospho-beta-D-ribosylamine + L-glutamate + diphosphate = 5-phospho-alpha-D-ribose 1-diphosphate + L-glutamine + H2O</text>
        <dbReference type="Rhea" id="RHEA:14905"/>
        <dbReference type="ChEBI" id="CHEBI:15377"/>
        <dbReference type="ChEBI" id="CHEBI:29985"/>
        <dbReference type="ChEBI" id="CHEBI:33019"/>
        <dbReference type="ChEBI" id="CHEBI:58017"/>
        <dbReference type="ChEBI" id="CHEBI:58359"/>
        <dbReference type="ChEBI" id="CHEBI:58681"/>
        <dbReference type="EC" id="2.4.2.14"/>
    </reaction>
</comment>
<comment type="cofactor">
    <cofactor evidence="2">
        <name>Mg(2+)</name>
        <dbReference type="ChEBI" id="CHEBI:18420"/>
    </cofactor>
    <text evidence="2">Binds 1 Mg(2+) ion per subunit.</text>
</comment>
<comment type="cofactor">
    <cofactor evidence="2">
        <name>[4Fe-4S] cluster</name>
        <dbReference type="ChEBI" id="CHEBI:49883"/>
    </cofactor>
    <text evidence="2">Binds 1 [4Fe-4S] cluster per subunit.</text>
</comment>
<comment type="pathway">
    <text evidence="2">Purine metabolism; IMP biosynthesis via de novo pathway; N(1)-(5-phospho-D-ribosyl)glycinamide from 5-phospho-alpha-D-ribose 1-diphosphate: step 1/2.</text>
</comment>
<comment type="similarity">
    <text evidence="2">In the C-terminal section; belongs to the purine/pyrimidine phosphoribosyltransferase family.</text>
</comment>
<keyword id="KW-0004">4Fe-4S</keyword>
<keyword id="KW-0315">Glutamine amidotransferase</keyword>
<keyword id="KW-0328">Glycosyltransferase</keyword>
<keyword id="KW-0408">Iron</keyword>
<keyword id="KW-0411">Iron-sulfur</keyword>
<keyword id="KW-0460">Magnesium</keyword>
<keyword id="KW-0479">Metal-binding</keyword>
<keyword id="KW-0658">Purine biosynthesis</keyword>
<keyword id="KW-1185">Reference proteome</keyword>
<keyword id="KW-0808">Transferase</keyword>
<gene>
    <name evidence="2" type="primary">purF</name>
    <name type="ordered locus">MJ0204</name>
</gene>
<name>PUR1_METJA</name>
<feature type="initiator methionine" description="Removed" evidence="1">
    <location>
        <position position="1"/>
    </location>
</feature>
<feature type="chain" id="PRO_0000139644" description="Amidophosphoribosyltransferase">
    <location>
        <begin position="2"/>
        <end position="471"/>
    </location>
</feature>
<feature type="domain" description="Glutamine amidotransferase type-2" evidence="2">
    <location>
        <begin position="2"/>
        <end position="224"/>
    </location>
</feature>
<feature type="active site" description="Nucleophile" evidence="2">
    <location>
        <position position="2"/>
    </location>
</feature>
<feature type="binding site" evidence="2">
    <location>
        <position position="255"/>
    </location>
    <ligand>
        <name>[4Fe-4S] cluster</name>
        <dbReference type="ChEBI" id="CHEBI:49883"/>
    </ligand>
</feature>
<feature type="binding site" evidence="2">
    <location>
        <position position="302"/>
    </location>
    <ligand>
        <name>Mg(2+)</name>
        <dbReference type="ChEBI" id="CHEBI:18420"/>
    </ligand>
</feature>
<feature type="binding site" evidence="2">
    <location>
        <position position="364"/>
    </location>
    <ligand>
        <name>Mg(2+)</name>
        <dbReference type="ChEBI" id="CHEBI:18420"/>
    </ligand>
</feature>
<feature type="binding site" evidence="2">
    <location>
        <position position="365"/>
    </location>
    <ligand>
        <name>Mg(2+)</name>
        <dbReference type="ChEBI" id="CHEBI:18420"/>
    </ligand>
</feature>
<feature type="binding site" evidence="2">
    <location>
        <position position="401"/>
    </location>
    <ligand>
        <name>[4Fe-4S] cluster</name>
        <dbReference type="ChEBI" id="CHEBI:49883"/>
    </ligand>
</feature>
<feature type="binding site" evidence="2">
    <location>
        <position position="450"/>
    </location>
    <ligand>
        <name>[4Fe-4S] cluster</name>
        <dbReference type="ChEBI" id="CHEBI:49883"/>
    </ligand>
</feature>
<feature type="binding site" evidence="2">
    <location>
        <position position="453"/>
    </location>
    <ligand>
        <name>[4Fe-4S] cluster</name>
        <dbReference type="ChEBI" id="CHEBI:49883"/>
    </ligand>
</feature>
<sequence>MCGIFGIYSYERLNVAKKIYYGLFALQHRGQEGAGIATSDGKNIHYYKNIGLVTDVFKNETLQNLFGYIGIGHVRYSTTGGKAVENCQPFVVKSSFGNIAIAHNGDLVNSDELRRELEMKGHIFTSSTDSEVIAQLLVRELLKTSDKIEAIKNTLKKLVGAYSLLIMFNDSLIAVRDPWGFKPLCIGRDESNIYISSEDCALTTLDAEFVKDIEPGEIIEIKDGEIISHKLDYGVSEYNPVNVDVPCIYRGAATCMFEYVYFARPDSTIDGISVYKVRKRIGKILAKEHPVDADVVSPIPDSGVTFALGFSEESGIPYYEGLIKNRYVGRTFILPSQNERELAVRLKLSPVKSVLEGKRVVLVDDSIVRGTTSRRIVNMVRKAGAKEVHLRIGCPKIISPCYYGIDMATKKELIASNKTEEEIGKAIGVDSIGYLSLEGLVKAIGRKDLCLACVTGKYPTEVNFEKILGRE</sequence>
<evidence type="ECO:0000250" key="1"/>
<evidence type="ECO:0000255" key="2">
    <source>
        <dbReference type="HAMAP-Rule" id="MF_01931"/>
    </source>
</evidence>